<dbReference type="EC" id="4.2.1.96" evidence="9"/>
<dbReference type="EMBL" id="AY536640">
    <property type="protein sequence ID" value="AAS45833.1"/>
    <property type="molecule type" value="mRNA"/>
</dbReference>
<dbReference type="EMBL" id="AB023044">
    <property type="protein sequence ID" value="BAA97373.1"/>
    <property type="molecule type" value="Genomic_DNA"/>
</dbReference>
<dbReference type="EMBL" id="CP002688">
    <property type="protein sequence ID" value="AED96036.1"/>
    <property type="molecule type" value="Genomic_DNA"/>
</dbReference>
<dbReference type="EMBL" id="AK117179">
    <property type="protein sequence ID" value="BAC41856.1"/>
    <property type="molecule type" value="mRNA"/>
</dbReference>
<dbReference type="EMBL" id="AY052253">
    <property type="protein sequence ID" value="AAK97723.1"/>
    <property type="molecule type" value="mRNA"/>
</dbReference>
<dbReference type="EMBL" id="AY143825">
    <property type="protein sequence ID" value="AAN28764.1"/>
    <property type="molecule type" value="mRNA"/>
</dbReference>
<dbReference type="EMBL" id="BT003720">
    <property type="protein sequence ID" value="AAO39948.1"/>
    <property type="molecule type" value="mRNA"/>
</dbReference>
<dbReference type="EMBL" id="AK226425">
    <property type="protein sequence ID" value="BAE98569.1"/>
    <property type="molecule type" value="mRNA"/>
</dbReference>
<dbReference type="EMBL" id="AY088643">
    <property type="protein sequence ID" value="AAM66965.1"/>
    <property type="molecule type" value="mRNA"/>
</dbReference>
<dbReference type="RefSeq" id="NP_199924.1">
    <property type="nucleotide sequence ID" value="NM_124490.5"/>
</dbReference>
<dbReference type="SMR" id="Q9LU63"/>
<dbReference type="FunCoup" id="Q9LU63">
    <property type="interactions" value="888"/>
</dbReference>
<dbReference type="IntAct" id="Q9LU63">
    <property type="interactions" value="14"/>
</dbReference>
<dbReference type="STRING" id="3702.Q9LU63"/>
<dbReference type="PaxDb" id="3702-AT5G51110.1"/>
<dbReference type="ProteomicsDB" id="241061"/>
<dbReference type="EnsemblPlants" id="AT5G51110.1">
    <property type="protein sequence ID" value="AT5G51110.1"/>
    <property type="gene ID" value="AT5G51110"/>
</dbReference>
<dbReference type="GeneID" id="835185"/>
<dbReference type="Gramene" id="AT5G51110.1">
    <property type="protein sequence ID" value="AT5G51110.1"/>
    <property type="gene ID" value="AT5G51110"/>
</dbReference>
<dbReference type="KEGG" id="ath:AT5G51110"/>
<dbReference type="Araport" id="AT5G51110"/>
<dbReference type="TAIR" id="AT5G51110">
    <property type="gene designation" value="SDIRIP1"/>
</dbReference>
<dbReference type="eggNOG" id="ENOG502QSK7">
    <property type="taxonomic scope" value="Eukaryota"/>
</dbReference>
<dbReference type="InParanoid" id="Q9LU63"/>
<dbReference type="OrthoDB" id="277398at2759"/>
<dbReference type="PhylomeDB" id="Q9LU63"/>
<dbReference type="PRO" id="PR:Q9LU63"/>
<dbReference type="Proteomes" id="UP000006548">
    <property type="component" value="Chromosome 5"/>
</dbReference>
<dbReference type="ExpressionAtlas" id="Q9LU63">
    <property type="expression patterns" value="baseline and differential"/>
</dbReference>
<dbReference type="GO" id="GO:0071944">
    <property type="term" value="C:cell periphery"/>
    <property type="evidence" value="ECO:0000314"/>
    <property type="project" value="TAIR"/>
</dbReference>
<dbReference type="GO" id="GO:0009507">
    <property type="term" value="C:chloroplast"/>
    <property type="evidence" value="ECO:0000314"/>
    <property type="project" value="TAIR"/>
</dbReference>
<dbReference type="GO" id="GO:0009570">
    <property type="term" value="C:chloroplast stroma"/>
    <property type="evidence" value="ECO:0000314"/>
    <property type="project" value="TAIR"/>
</dbReference>
<dbReference type="GO" id="GO:0005634">
    <property type="term" value="C:nucleus"/>
    <property type="evidence" value="ECO:0000314"/>
    <property type="project" value="TAIR"/>
</dbReference>
<dbReference type="GO" id="GO:0005886">
    <property type="term" value="C:plasma membrane"/>
    <property type="evidence" value="ECO:0007669"/>
    <property type="project" value="UniProtKB-SubCell"/>
</dbReference>
<dbReference type="GO" id="GO:0009536">
    <property type="term" value="C:plastid"/>
    <property type="evidence" value="ECO:0007005"/>
    <property type="project" value="TAIR"/>
</dbReference>
<dbReference type="GO" id="GO:0008124">
    <property type="term" value="F:4-alpha-hydroxytetrahydrobiopterin dehydratase activity"/>
    <property type="evidence" value="ECO:0007669"/>
    <property type="project" value="UniProtKB-EC"/>
</dbReference>
<dbReference type="GO" id="GO:0009737">
    <property type="term" value="P:response to abscisic acid"/>
    <property type="evidence" value="ECO:0000315"/>
    <property type="project" value="TAIR"/>
</dbReference>
<dbReference type="GO" id="GO:0009651">
    <property type="term" value="P:response to salt stress"/>
    <property type="evidence" value="ECO:0000315"/>
    <property type="project" value="TAIR"/>
</dbReference>
<dbReference type="GO" id="GO:0110102">
    <property type="term" value="P:ribulose bisphosphate carboxylase complex assembly"/>
    <property type="evidence" value="ECO:0000315"/>
    <property type="project" value="TAIR"/>
</dbReference>
<dbReference type="GO" id="GO:0006729">
    <property type="term" value="P:tetrahydrobiopterin biosynthetic process"/>
    <property type="evidence" value="ECO:0007669"/>
    <property type="project" value="UniProtKB-KW"/>
</dbReference>
<dbReference type="CDD" id="cd00913">
    <property type="entry name" value="PCD_DCoH_subfamily_a"/>
    <property type="match status" value="1"/>
</dbReference>
<dbReference type="FunFam" id="3.30.1360.20:FF:000003">
    <property type="entry name" value="Transcriptional coactivator/pterin dehydratase"/>
    <property type="match status" value="1"/>
</dbReference>
<dbReference type="Gene3D" id="3.30.1360.20">
    <property type="entry name" value="Transcriptional coactivator/pterin dehydratase"/>
    <property type="match status" value="1"/>
</dbReference>
<dbReference type="InterPro" id="IPR036428">
    <property type="entry name" value="PCD_sf"/>
</dbReference>
<dbReference type="InterPro" id="IPR001533">
    <property type="entry name" value="Pterin_deHydtase"/>
</dbReference>
<dbReference type="PANTHER" id="PTHR12599">
    <property type="entry name" value="PTERIN-4-ALPHA-CARBINOLAMINE DEHYDRATASE"/>
    <property type="match status" value="1"/>
</dbReference>
<dbReference type="PANTHER" id="PTHR12599:SF8">
    <property type="entry name" value="PTERIN-4-ALPHA-CARBINOLAMINE DEHYDRATASE, CHLOROPLASTIC-RELATED"/>
    <property type="match status" value="1"/>
</dbReference>
<dbReference type="Pfam" id="PF01329">
    <property type="entry name" value="Pterin_4a"/>
    <property type="match status" value="1"/>
</dbReference>
<dbReference type="SUPFAM" id="SSF55248">
    <property type="entry name" value="PCD-like"/>
    <property type="match status" value="1"/>
</dbReference>
<sequence length="220" mass="23897">MAATSSSPPCNISASSLLLRQPSRSILKVFGLLPPVSRNNRKLGRLTVTRSNLAQDFLGDFGARDPYPEEIASQFGDKVLGCQSTEHKILIPNASVLSLSQLQCSPVSSSQPPLSGDDARTLLHKVLGWSIVDNEAGGLKIRCMWKVRDFGCGVELINRIHKVAEASGHYPSLHLESPTQVRAELFTSSIGGLSMNDFIMAAKIDDIKTSDLSPRKRAWA</sequence>
<reference key="1">
    <citation type="thesis" date="2002" institute="University of Queensland" country="Australia">
        <title>Functional characterisation of Arabidopsis DRGs: clues from the DRG2 interactor PDL1.</title>
        <authorList>
            <person name="Plume A.M."/>
        </authorList>
    </citation>
    <scope>NUCLEOTIDE SEQUENCE [MRNA]</scope>
</reference>
<reference key="2">
    <citation type="journal article" date="2000" name="DNA Res.">
        <title>Structural analysis of Arabidopsis thaliana chromosome 5. X. Sequence features of the regions of 3,076,755 bp covered by sixty P1 and TAC clones.</title>
        <authorList>
            <person name="Sato S."/>
            <person name="Nakamura Y."/>
            <person name="Kaneko T."/>
            <person name="Katoh T."/>
            <person name="Asamizu E."/>
            <person name="Kotani H."/>
            <person name="Tabata S."/>
        </authorList>
    </citation>
    <scope>NUCLEOTIDE SEQUENCE [LARGE SCALE GENOMIC DNA]</scope>
    <source>
        <strain>cv. Columbia</strain>
    </source>
</reference>
<reference key="3">
    <citation type="journal article" date="2017" name="Plant J.">
        <title>Araport11: a complete reannotation of the Arabidopsis thaliana reference genome.</title>
        <authorList>
            <person name="Cheng C.Y."/>
            <person name="Krishnakumar V."/>
            <person name="Chan A.P."/>
            <person name="Thibaud-Nissen F."/>
            <person name="Schobel S."/>
            <person name="Town C.D."/>
        </authorList>
    </citation>
    <scope>GENOME REANNOTATION</scope>
    <source>
        <strain>cv. Columbia</strain>
    </source>
</reference>
<reference key="4">
    <citation type="journal article" date="2002" name="Science">
        <title>Functional annotation of a full-length Arabidopsis cDNA collection.</title>
        <authorList>
            <person name="Seki M."/>
            <person name="Narusaka M."/>
            <person name="Kamiya A."/>
            <person name="Ishida J."/>
            <person name="Satou M."/>
            <person name="Sakurai T."/>
            <person name="Nakajima M."/>
            <person name="Enju A."/>
            <person name="Akiyama K."/>
            <person name="Oono Y."/>
            <person name="Muramatsu M."/>
            <person name="Hayashizaki Y."/>
            <person name="Kawai J."/>
            <person name="Carninci P."/>
            <person name="Itoh M."/>
            <person name="Ishii Y."/>
            <person name="Arakawa T."/>
            <person name="Shibata K."/>
            <person name="Shinagawa A."/>
            <person name="Shinozaki K."/>
        </authorList>
    </citation>
    <scope>NUCLEOTIDE SEQUENCE [LARGE SCALE MRNA]</scope>
    <source>
        <strain>cv. Columbia</strain>
    </source>
</reference>
<reference key="5">
    <citation type="journal article" date="2003" name="Science">
        <title>Empirical analysis of transcriptional activity in the Arabidopsis genome.</title>
        <authorList>
            <person name="Yamada K."/>
            <person name="Lim J."/>
            <person name="Dale J.M."/>
            <person name="Chen H."/>
            <person name="Shinn P."/>
            <person name="Palm C.J."/>
            <person name="Southwick A.M."/>
            <person name="Wu H.C."/>
            <person name="Kim C.J."/>
            <person name="Nguyen M."/>
            <person name="Pham P.K."/>
            <person name="Cheuk R.F."/>
            <person name="Karlin-Newmann G."/>
            <person name="Liu S.X."/>
            <person name="Lam B."/>
            <person name="Sakano H."/>
            <person name="Wu T."/>
            <person name="Yu G."/>
            <person name="Miranda M."/>
            <person name="Quach H.L."/>
            <person name="Tripp M."/>
            <person name="Chang C.H."/>
            <person name="Lee J.M."/>
            <person name="Toriumi M.J."/>
            <person name="Chan M.M."/>
            <person name="Tang C.C."/>
            <person name="Onodera C.S."/>
            <person name="Deng J.M."/>
            <person name="Akiyama K."/>
            <person name="Ansari Y."/>
            <person name="Arakawa T."/>
            <person name="Banh J."/>
            <person name="Banno F."/>
            <person name="Bowser L."/>
            <person name="Brooks S.Y."/>
            <person name="Carninci P."/>
            <person name="Chao Q."/>
            <person name="Choy N."/>
            <person name="Enju A."/>
            <person name="Goldsmith A.D."/>
            <person name="Gurjal M."/>
            <person name="Hansen N.F."/>
            <person name="Hayashizaki Y."/>
            <person name="Johnson-Hopson C."/>
            <person name="Hsuan V.W."/>
            <person name="Iida K."/>
            <person name="Karnes M."/>
            <person name="Khan S."/>
            <person name="Koesema E."/>
            <person name="Ishida J."/>
            <person name="Jiang P.X."/>
            <person name="Jones T."/>
            <person name="Kawai J."/>
            <person name="Kamiya A."/>
            <person name="Meyers C."/>
            <person name="Nakajima M."/>
            <person name="Narusaka M."/>
            <person name="Seki M."/>
            <person name="Sakurai T."/>
            <person name="Satou M."/>
            <person name="Tamse R."/>
            <person name="Vaysberg M."/>
            <person name="Wallender E.K."/>
            <person name="Wong C."/>
            <person name="Yamamura Y."/>
            <person name="Yuan S."/>
            <person name="Shinozaki K."/>
            <person name="Davis R.W."/>
            <person name="Theologis A."/>
            <person name="Ecker J.R."/>
        </authorList>
    </citation>
    <scope>NUCLEOTIDE SEQUENCE [LARGE SCALE MRNA]</scope>
    <source>
        <strain>cv. Columbia</strain>
    </source>
</reference>
<reference key="6">
    <citation type="submission" date="2006-07" db="EMBL/GenBank/DDBJ databases">
        <title>Large-scale analysis of RIKEN Arabidopsis full-length (RAFL) cDNAs.</title>
        <authorList>
            <person name="Totoki Y."/>
            <person name="Seki M."/>
            <person name="Ishida J."/>
            <person name="Nakajima M."/>
            <person name="Enju A."/>
            <person name="Kamiya A."/>
            <person name="Narusaka M."/>
            <person name="Shin-i T."/>
            <person name="Nakagawa M."/>
            <person name="Sakamoto N."/>
            <person name="Oishi K."/>
            <person name="Kohara Y."/>
            <person name="Kobayashi M."/>
            <person name="Toyoda A."/>
            <person name="Sakaki Y."/>
            <person name="Sakurai T."/>
            <person name="Iida K."/>
            <person name="Akiyama K."/>
            <person name="Satou M."/>
            <person name="Toyoda T."/>
            <person name="Konagaya A."/>
            <person name="Carninci P."/>
            <person name="Kawai J."/>
            <person name="Hayashizaki Y."/>
            <person name="Shinozaki K."/>
        </authorList>
    </citation>
    <scope>NUCLEOTIDE SEQUENCE [LARGE SCALE MRNA]</scope>
    <source>
        <strain>cv. Columbia</strain>
    </source>
</reference>
<reference key="7">
    <citation type="submission" date="2002-03" db="EMBL/GenBank/DDBJ databases">
        <title>Full-length cDNA from Arabidopsis thaliana.</title>
        <authorList>
            <person name="Brover V.V."/>
            <person name="Troukhan M.E."/>
            <person name="Alexandrov N.A."/>
            <person name="Lu Y.-P."/>
            <person name="Flavell R.B."/>
            <person name="Feldmann K.A."/>
        </authorList>
    </citation>
    <scope>NUCLEOTIDE SEQUENCE [LARGE SCALE MRNA]</scope>
</reference>
<reference key="8">
    <citation type="journal article" date="2008" name="Plant Physiol.">
        <title>Phylogenomic and functional analysis of pterin-4a-carbinolamine dehydratase family (COG2154) proteins in plants and microorganisms.</title>
        <authorList>
            <person name="Naponelli V."/>
            <person name="Noiriel A."/>
            <person name="Ziemak M.J."/>
            <person name="Beverley S.M."/>
            <person name="Lye L.F."/>
            <person name="Plume A.M."/>
            <person name="Botella J.R."/>
            <person name="Loizeau K."/>
            <person name="Ravanel S."/>
            <person name="Rebeille F."/>
            <person name="de Crecy-Lagard V."/>
            <person name="Hanson A.D."/>
        </authorList>
    </citation>
    <scope>SUBCELLULAR LOCATION</scope>
</reference>
<reference key="9">
    <citation type="journal article" date="2015" name="Plant Cell">
        <title>The RING finger ubiquitin E3 ligase SDIR1 targets SDIR1-INTERACTING PROTEIN1 for degradation to modulate the salt stress response and ABA signaling in Arabidopsis.</title>
        <authorList>
            <person name="Zhang H."/>
            <person name="Cui F."/>
            <person name="Wu Y."/>
            <person name="Lou L."/>
            <person name="Liu L."/>
            <person name="Tian M."/>
            <person name="Ning Y."/>
            <person name="Shu K."/>
            <person name="Tang S."/>
            <person name="Xie Q."/>
        </authorList>
    </citation>
    <scope>FUNCTION</scope>
    <scope>INTERACTION WITH SDIR1</scope>
    <scope>SUBCELLULAR LOCATION</scope>
    <scope>UBIQUITINATION</scope>
</reference>
<reference key="10">
    <citation type="journal article" date="2017" name="Plant Physiol.">
        <title>AtAIRP2 E3 ligase affects ABA and high-salinity responses by stimulating its ATP1/SDIRIP1 substrate turnover.</title>
        <authorList>
            <person name="Oh T.R."/>
            <person name="Kim J.H."/>
            <person name="Cho S.K."/>
            <person name="Ryu M.Y."/>
            <person name="Yang S.W."/>
            <person name="Kim W.T."/>
        </authorList>
    </citation>
    <scope>FUNCTION</scope>
    <scope>INTERACTION WITH AIRP2</scope>
    <scope>UBIQUITINATION</scope>
</reference>
<proteinExistence type="evidence at protein level"/>
<keyword id="KW-1003">Cell membrane</keyword>
<keyword id="KW-0150">Chloroplast</keyword>
<keyword id="KW-0456">Lyase</keyword>
<keyword id="KW-0472">Membrane</keyword>
<keyword id="KW-0539">Nucleus</keyword>
<keyword id="KW-0934">Plastid</keyword>
<keyword id="KW-1185">Reference proteome</keyword>
<keyword id="KW-0783">Tetrahydrobiopterin biosynthesis</keyword>
<keyword id="KW-0809">Transit peptide</keyword>
<keyword id="KW-0832">Ubl conjugation</keyword>
<comment type="function">
    <text evidence="1 4 5">Involved in tetrahydrobiopterin biosynthesis (By similarity). Interacts with and acts downstream of the E3 ubiquitin-protein ligase SDIR1 in abscisic acid (ABA) and salt stress signaling. Regulates the expression of the bZIP transcription factor ABI5, which mediates responses to ABA during seed germination and salt stress. The SDIR1-ATP1/SDIRIP1 complex plays an important role in ABA signaling through the ubiquitination pathway (PubMed:25616872). Acts downstream of AIRP2 in regulation of ABA signaling during drought stress (PubMed:28626006).</text>
</comment>
<comment type="catalytic activity">
    <reaction evidence="9">
        <text>(4aS,6R)-4a-hydroxy-L-erythro-5,6,7,8-tetrahydrobiopterin = (6R)-L-erythro-6,7-dihydrobiopterin + H2O</text>
        <dbReference type="Rhea" id="RHEA:11920"/>
        <dbReference type="ChEBI" id="CHEBI:15377"/>
        <dbReference type="ChEBI" id="CHEBI:15642"/>
        <dbReference type="ChEBI" id="CHEBI:43120"/>
        <dbReference type="EC" id="4.2.1.96"/>
    </reaction>
</comment>
<comment type="subunit">
    <text evidence="4 5">Interacts with SDIR1 (PubMed:25616872). Interacts with AIRP2 (PubMed:28626006).</text>
</comment>
<comment type="subcellular location">
    <subcellularLocation>
        <location evidence="3 4">Plastid</location>
        <location evidence="3 4">Chloroplast</location>
    </subcellularLocation>
    <subcellularLocation>
        <location evidence="4">Cell membrane</location>
        <topology evidence="4">Peripheral membrane protein</topology>
    </subcellularLocation>
    <subcellularLocation>
        <location evidence="4">Nucleus</location>
    </subcellularLocation>
</comment>
<comment type="PTM">
    <text evidence="4">Ubiquitinated by SDIR1. Ubiquitination leads to its subsequent degradation, thus controlling abscisic acid (ABA) signaling (PubMed:25616872). Ubiquitinated by AIRP2. Ubiquitination leads to its subsequent degradation, thus controlling abscisic acid (ABA) signaling during drought stress (PubMed:25616872).</text>
</comment>
<comment type="similarity">
    <text evidence="9">Belongs to the pterin-4-alpha-carbinolamine dehydratase family.</text>
</comment>
<accession>Q9LU63</accession>
<accession>Q8GZ70</accession>
<accession>Q8L944</accession>
<organism>
    <name type="scientific">Arabidopsis thaliana</name>
    <name type="common">Mouse-ear cress</name>
    <dbReference type="NCBI Taxonomy" id="3702"/>
    <lineage>
        <taxon>Eukaryota</taxon>
        <taxon>Viridiplantae</taxon>
        <taxon>Streptophyta</taxon>
        <taxon>Embryophyta</taxon>
        <taxon>Tracheophyta</taxon>
        <taxon>Spermatophyta</taxon>
        <taxon>Magnoliopsida</taxon>
        <taxon>eudicotyledons</taxon>
        <taxon>Gunneridae</taxon>
        <taxon>Pentapetalae</taxon>
        <taxon>rosids</taxon>
        <taxon>malvids</taxon>
        <taxon>Brassicales</taxon>
        <taxon>Brassicaceae</taxon>
        <taxon>Camelineae</taxon>
        <taxon>Arabidopsis</taxon>
    </lineage>
</organism>
<evidence type="ECO:0000250" key="1">
    <source>
        <dbReference type="UniProtKB" id="P61457"/>
    </source>
</evidence>
<evidence type="ECO:0000255" key="2"/>
<evidence type="ECO:0000269" key="3">
    <source>
    </source>
</evidence>
<evidence type="ECO:0000269" key="4">
    <source>
    </source>
</evidence>
<evidence type="ECO:0000269" key="5">
    <source>
    </source>
</evidence>
<evidence type="ECO:0000303" key="6">
    <source>
    </source>
</evidence>
<evidence type="ECO:0000303" key="7">
    <source>
    </source>
</evidence>
<evidence type="ECO:0000303" key="8">
    <source ref="1"/>
</evidence>
<evidence type="ECO:0000305" key="9"/>
<evidence type="ECO:0000312" key="10">
    <source>
        <dbReference type="Araport" id="AT5G51110"/>
    </source>
</evidence>
<evidence type="ECO:0000312" key="11">
    <source>
        <dbReference type="EMBL" id="BAA97373.1"/>
    </source>
</evidence>
<protein>
    <recommendedName>
        <fullName evidence="9">Probable pterin-4-alpha-carbinolamine dehydratase, chloroplastic</fullName>
        <ecNumber evidence="9">4.2.1.96</ecNumber>
    </recommendedName>
    <alternativeName>
        <fullName evidence="9">4-alpha-hydroxy-tetrahydropterin dehydratase</fullName>
    </alternativeName>
    <alternativeName>
        <fullName evidence="8">PCD/DCoH-like protein 1</fullName>
    </alternativeName>
    <alternativeName>
        <fullName evidence="7">Protein AIRP2 TARGET PROTEIN 1</fullName>
    </alternativeName>
    <alternativeName>
        <fullName evidence="6">Protein SDIR1-INTERACTING PROTEIN 1</fullName>
    </alternativeName>
</protein>
<feature type="transit peptide" description="Chloroplast" evidence="2">
    <location>
        <begin position="1"/>
        <end position="50"/>
    </location>
</feature>
<feature type="chain" id="PRO_0000443385" description="Probable pterin-4-alpha-carbinolamine dehydratase, chloroplastic">
    <location>
        <begin position="51"/>
        <end position="220"/>
    </location>
</feature>
<feature type="sequence conflict" description="In Ref. 7; AAM66965." evidence="9" ref="7">
    <original>R</original>
    <variation>K</variation>
    <location>
        <position position="148"/>
    </location>
</feature>
<name>ATP1_ARATH</name>
<gene>
    <name evidence="7" type="primary">ATP1</name>
    <name evidence="8" type="synonym">PDL1</name>
    <name evidence="6" type="synonym">SDIRIP1</name>
    <name evidence="10" type="ordered locus">At5g51110</name>
    <name evidence="11" type="ORF">MWD22.5</name>
</gene>